<feature type="signal peptide" evidence="4 5">
    <location>
        <begin position="1"/>
        <end position="19"/>
    </location>
</feature>
<feature type="chain" id="PRO_0000401121" description="Sodium channel neurotoxin MeuNaTxalpha-4" evidence="5">
    <location>
        <begin position="20"/>
        <end position="85"/>
    </location>
</feature>
<feature type="propeptide" id="PRO_0000447443" description="Removed by a carboxypeptidase" evidence="7">
    <location>
        <position position="86"/>
    </location>
</feature>
<feature type="domain" description="LCN-type CS-alpha/beta" evidence="3">
    <location>
        <begin position="21"/>
        <end position="85"/>
    </location>
</feature>
<feature type="disulfide bond" evidence="1">
    <location>
        <begin position="31"/>
        <end position="84"/>
    </location>
</feature>
<feature type="disulfide bond" evidence="1">
    <location>
        <begin position="35"/>
        <end position="57"/>
    </location>
</feature>
<feature type="disulfide bond" evidence="1">
    <location>
        <begin position="43"/>
        <end position="67"/>
    </location>
</feature>
<feature type="disulfide bond" evidence="1">
    <location>
        <begin position="47"/>
        <end position="69"/>
    </location>
</feature>
<feature type="sequence conflict" description="In Ref. 2; AA sequence." evidence="7" ref="2">
    <original>T</original>
    <variation>I</variation>
    <location>
        <position position="62"/>
    </location>
</feature>
<feature type="sequence conflict" description="In Ref. 2; AA sequence." evidence="7" ref="2">
    <original>V</original>
    <variation>A</variation>
    <location>
        <position position="71"/>
    </location>
</feature>
<evidence type="ECO:0000250" key="1">
    <source>
        <dbReference type="UniProtKB" id="P86405"/>
    </source>
</evidence>
<evidence type="ECO:0000255" key="2"/>
<evidence type="ECO:0000255" key="3">
    <source>
        <dbReference type="PROSITE-ProRule" id="PRU01210"/>
    </source>
</evidence>
<evidence type="ECO:0000269" key="4">
    <source>
    </source>
</evidence>
<evidence type="ECO:0000269" key="5">
    <source ref="2"/>
</evidence>
<evidence type="ECO:0000303" key="6">
    <source ref="2"/>
</evidence>
<evidence type="ECO:0000305" key="7"/>
<evidence type="ECO:0000305" key="8">
    <source ref="2"/>
</evidence>
<protein>
    <recommendedName>
        <fullName evidence="6">Sodium channel neurotoxin MeuNaTxalpha-4</fullName>
    </recommendedName>
</protein>
<comment type="function">
    <text evidence="4 5">Alpha toxins bind voltage-independently at site-3 of sodium channels (Nav) and inhibit the inactivation of the activated channels, thereby blocking neuronal transmission. This toxin inhibits inactivation of drosophila DmNav1 (EC(50)=130 nM) (PubMed:21969612, Ref.2).</text>
</comment>
<comment type="subcellular location">
    <subcellularLocation>
        <location evidence="5">Secreted</location>
    </subcellularLocation>
</comment>
<comment type="tissue specificity">
    <text evidence="8">Expressed by the venom gland.</text>
</comment>
<comment type="domain">
    <text evidence="7">Has the structural arrangement of an alpha-helix connected to antiparallel beta-sheets by disulfide bonds (CS-alpha/beta).</text>
</comment>
<comment type="mass spectrometry" mass="7193.0" method="MALDI" evidence="5"/>
<comment type="mass spectrometry" mass="7199.55" method="MALDI" evidence="4"/>
<comment type="miscellaneous">
    <text evidence="4">Negative results: shows no effect on Nav1.2/SCN2A, Nav1.3/SCN3A, Nav1.4/SCN4A, Nav1.5/SCN5A, Nav1.6/SCN8A, Nav1.7/SCN9A and Nav1.8/SCN10A (PubMed:21969612).</text>
</comment>
<comment type="similarity">
    <text evidence="2">Belongs to the long (4 C-C) scorpion toxin superfamily. Sodium channel inhibitor family. Alpha subfamily.</text>
</comment>
<proteinExistence type="evidence at protein level"/>
<name>SCXN4_MESEU</name>
<keyword id="KW-0903">Direct protein sequencing</keyword>
<keyword id="KW-1015">Disulfide bond</keyword>
<keyword id="KW-0872">Ion channel impairing toxin</keyword>
<keyword id="KW-0528">Neurotoxin</keyword>
<keyword id="KW-0964">Secreted</keyword>
<keyword id="KW-0732">Signal</keyword>
<keyword id="KW-0800">Toxin</keyword>
<keyword id="KW-0738">Voltage-gated sodium channel impairing toxin</keyword>
<accession>P86404</accession>
<accession>E4VP51</accession>
<sequence length="86" mass="9442">MNYLILISFALLVITGVESARDAYIAKPHNCVYECFDAFSSYCNGVCTKNGAKSGYCQILGTYGNGCWCIVLPDNVPIRIPGKCHR</sequence>
<organism>
    <name type="scientific">Mesobuthus eupeus</name>
    <name type="common">Lesser Asian scorpion</name>
    <name type="synonym">Buthus eupeus</name>
    <dbReference type="NCBI Taxonomy" id="34648"/>
    <lineage>
        <taxon>Eukaryota</taxon>
        <taxon>Metazoa</taxon>
        <taxon>Ecdysozoa</taxon>
        <taxon>Arthropoda</taxon>
        <taxon>Chelicerata</taxon>
        <taxon>Arachnida</taxon>
        <taxon>Scorpiones</taxon>
        <taxon>Buthida</taxon>
        <taxon>Buthoidea</taxon>
        <taxon>Buthidae</taxon>
        <taxon>Mesobuthus</taxon>
    </lineage>
</organism>
<dbReference type="EMBL" id="EF445093">
    <property type="protein sequence ID" value="ABR21068.1"/>
    <property type="molecule type" value="mRNA"/>
</dbReference>
<dbReference type="BMRB" id="P86404"/>
<dbReference type="SMR" id="P86404"/>
<dbReference type="GO" id="GO:0005576">
    <property type="term" value="C:extracellular region"/>
    <property type="evidence" value="ECO:0007669"/>
    <property type="project" value="UniProtKB-SubCell"/>
</dbReference>
<dbReference type="GO" id="GO:0019871">
    <property type="term" value="F:sodium channel inhibitor activity"/>
    <property type="evidence" value="ECO:0007669"/>
    <property type="project" value="InterPro"/>
</dbReference>
<dbReference type="GO" id="GO:0090729">
    <property type="term" value="F:toxin activity"/>
    <property type="evidence" value="ECO:0007669"/>
    <property type="project" value="UniProtKB-KW"/>
</dbReference>
<dbReference type="GO" id="GO:0006952">
    <property type="term" value="P:defense response"/>
    <property type="evidence" value="ECO:0007669"/>
    <property type="project" value="InterPro"/>
</dbReference>
<dbReference type="CDD" id="cd23106">
    <property type="entry name" value="neurotoxins_LC_scorpion"/>
    <property type="match status" value="1"/>
</dbReference>
<dbReference type="FunFam" id="3.30.30.10:FF:000002">
    <property type="entry name" value="Alpha-like toxin BmK-M1"/>
    <property type="match status" value="1"/>
</dbReference>
<dbReference type="Gene3D" id="3.30.30.10">
    <property type="entry name" value="Knottin, scorpion toxin-like"/>
    <property type="match status" value="1"/>
</dbReference>
<dbReference type="InterPro" id="IPR044062">
    <property type="entry name" value="LCN-type_CS_alpha_beta_dom"/>
</dbReference>
<dbReference type="InterPro" id="IPR003614">
    <property type="entry name" value="Scorpion_toxin-like"/>
</dbReference>
<dbReference type="InterPro" id="IPR036574">
    <property type="entry name" value="Scorpion_toxin-like_sf"/>
</dbReference>
<dbReference type="InterPro" id="IPR018218">
    <property type="entry name" value="Scorpion_toxinL"/>
</dbReference>
<dbReference type="InterPro" id="IPR002061">
    <property type="entry name" value="Scorpion_toxinL/defensin"/>
</dbReference>
<dbReference type="Pfam" id="PF00537">
    <property type="entry name" value="Toxin_3"/>
    <property type="match status" value="1"/>
</dbReference>
<dbReference type="PRINTS" id="PR00285">
    <property type="entry name" value="SCORPNTOXIN"/>
</dbReference>
<dbReference type="SMART" id="SM00505">
    <property type="entry name" value="Knot1"/>
    <property type="match status" value="1"/>
</dbReference>
<dbReference type="SUPFAM" id="SSF57095">
    <property type="entry name" value="Scorpion toxin-like"/>
    <property type="match status" value="1"/>
</dbReference>
<dbReference type="PROSITE" id="PS51863">
    <property type="entry name" value="LCN_CSAB"/>
    <property type="match status" value="1"/>
</dbReference>
<reference key="1">
    <citation type="journal article" date="2012" name="Mol. Cell. Proteomics">
        <title>Evolutionary diversification of Mesobuthus alpha-scorpion toxins affecting sodium channels.</title>
        <authorList>
            <person name="Zhu S."/>
            <person name="Peigneur S."/>
            <person name="Gao B."/>
            <person name="Lu X."/>
            <person name="Cao C."/>
            <person name="Tytgat J."/>
        </authorList>
    </citation>
    <scope>NUCLEOTIDE SEQUENCE [GENOMIC DNA / MRNA]</scope>
    <scope>PROTEIN SEQUENCE OF 20-25</scope>
    <scope>FUNCTION</scope>
    <scope>SUBCELLULAR LOCATION</scope>
    <scope>MASS SPECTROMETRY</scope>
    <source>
        <tissue>Venom</tissue>
        <tissue>Venom gland</tissue>
    </source>
</reference>
<reference key="2">
    <citation type="submission" date="2009-11" db="UniProtKB">
        <title>Characterization of a sodium channel toxin from the scorpion Mesobuthus eupeus venom.</title>
        <authorList>
            <person name="Zhu S.Y."/>
            <person name="Gao B."/>
        </authorList>
    </citation>
    <scope>PROTEIN SEQUENCE OF 20-85</scope>
    <scope>FUNCTION</scope>
    <scope>SUBCELLULAR LOCATION</scope>
    <scope>MASS SPECTROMETRY</scope>
    <source>
        <tissue>Venom</tissue>
    </source>
</reference>